<sequence>MKLRPHLKIEAKGTGSVSFFSEDWLTAQQARTFARELGRFPYMKELEFEDEKGGSWTLKELEKLTEELAQEPDDITVYFDGSFDKESELAGLGIVIYYSLGGTRHRLRKNKSFRLKTNNEAEYAALYEAIREVRELGASRNSITIKGDSLVVLNQLDGSWPCYDPSHNEWLDKIEALLESLKLTPTYETIQRKDNQEADGLAKKILSHQFVESHTKLDRNGDDDIG</sequence>
<accession>P54164</accession>
<comment type="sequence caution" evidence="2">
    <conflict type="erroneous initiation">
        <sequence resource="EMBL-CDS" id="AAA96620"/>
    </conflict>
</comment>
<dbReference type="EMBL" id="L77246">
    <property type="protein sequence ID" value="AAA96620.1"/>
    <property type="status" value="ALT_INIT"/>
    <property type="molecule type" value="Genomic_DNA"/>
</dbReference>
<dbReference type="EMBL" id="AL009126">
    <property type="protein sequence ID" value="CAB14115.2"/>
    <property type="molecule type" value="Genomic_DNA"/>
</dbReference>
<dbReference type="PIR" id="F69934">
    <property type="entry name" value="F69934"/>
</dbReference>
<dbReference type="RefSeq" id="NP_390080.2">
    <property type="nucleotide sequence ID" value="NC_000964.3"/>
</dbReference>
<dbReference type="RefSeq" id="WP_003230769.1">
    <property type="nucleotide sequence ID" value="NZ_OZ025638.1"/>
</dbReference>
<dbReference type="SMR" id="P54164"/>
<dbReference type="FunCoup" id="P54164">
    <property type="interactions" value="22"/>
</dbReference>
<dbReference type="STRING" id="224308.BSU21970"/>
<dbReference type="PaxDb" id="224308-BSU21970"/>
<dbReference type="EnsemblBacteria" id="CAB14115">
    <property type="protein sequence ID" value="CAB14115"/>
    <property type="gene ID" value="BSU_21970"/>
</dbReference>
<dbReference type="GeneID" id="939073"/>
<dbReference type="KEGG" id="bsu:BSU21970"/>
<dbReference type="PATRIC" id="fig|224308.179.peg.2399"/>
<dbReference type="eggNOG" id="COG0328">
    <property type="taxonomic scope" value="Bacteria"/>
</dbReference>
<dbReference type="InParanoid" id="P54164"/>
<dbReference type="OrthoDB" id="2680098at2"/>
<dbReference type="BioCyc" id="BSUB:BSU21970-MONOMER"/>
<dbReference type="Proteomes" id="UP000001570">
    <property type="component" value="Chromosome"/>
</dbReference>
<dbReference type="GO" id="GO:0003676">
    <property type="term" value="F:nucleic acid binding"/>
    <property type="evidence" value="ECO:0007669"/>
    <property type="project" value="InterPro"/>
</dbReference>
<dbReference type="GO" id="GO:0004523">
    <property type="term" value="F:RNA-DNA hybrid ribonuclease activity"/>
    <property type="evidence" value="ECO:0007669"/>
    <property type="project" value="InterPro"/>
</dbReference>
<dbReference type="CDD" id="cd09279">
    <property type="entry name" value="RNase_HI_like"/>
    <property type="match status" value="1"/>
</dbReference>
<dbReference type="Gene3D" id="3.30.420.10">
    <property type="entry name" value="Ribonuclease H-like superfamily/Ribonuclease H"/>
    <property type="match status" value="1"/>
</dbReference>
<dbReference type="InterPro" id="IPR012337">
    <property type="entry name" value="RNaseH-like_sf"/>
</dbReference>
<dbReference type="InterPro" id="IPR002156">
    <property type="entry name" value="RNaseH_domain"/>
</dbReference>
<dbReference type="InterPro" id="IPR036397">
    <property type="entry name" value="RNaseH_sf"/>
</dbReference>
<dbReference type="NCBIfam" id="NF005822">
    <property type="entry name" value="PRK07708.1"/>
    <property type="match status" value="1"/>
</dbReference>
<dbReference type="PANTHER" id="PTHR46387">
    <property type="entry name" value="POLYNUCLEOTIDYL TRANSFERASE, RIBONUCLEASE H-LIKE SUPERFAMILY PROTEIN"/>
    <property type="match status" value="1"/>
</dbReference>
<dbReference type="PANTHER" id="PTHR46387:SF2">
    <property type="entry name" value="RIBONUCLEASE HI"/>
    <property type="match status" value="1"/>
</dbReference>
<dbReference type="Pfam" id="PF13456">
    <property type="entry name" value="RVT_3"/>
    <property type="match status" value="1"/>
</dbReference>
<dbReference type="SUPFAM" id="SSF53098">
    <property type="entry name" value="Ribonuclease H-like"/>
    <property type="match status" value="1"/>
</dbReference>
<dbReference type="PROSITE" id="PS50879">
    <property type="entry name" value="RNASE_H_1"/>
    <property type="match status" value="1"/>
</dbReference>
<proteinExistence type="predicted"/>
<keyword id="KW-1185">Reference proteome</keyword>
<organism>
    <name type="scientific">Bacillus subtilis (strain 168)</name>
    <dbReference type="NCBI Taxonomy" id="224308"/>
    <lineage>
        <taxon>Bacteria</taxon>
        <taxon>Bacillati</taxon>
        <taxon>Bacillota</taxon>
        <taxon>Bacilli</taxon>
        <taxon>Bacillales</taxon>
        <taxon>Bacillaceae</taxon>
        <taxon>Bacillus</taxon>
    </lineage>
</organism>
<gene>
    <name type="primary">ypeP</name>
    <name type="ordered locus">BSU21970</name>
</gene>
<reference key="1">
    <citation type="journal article" date="1996" name="Microbiology">
        <title>Organization of the Bacillus subtilis 168 chromosome between kdg and the attachment site of the SP beta prophage: use of long accurate PCR and yeast artificial chromosomes for sequencing.</title>
        <authorList>
            <person name="Capuano V."/>
            <person name="Galleron N."/>
            <person name="Pujic P."/>
            <person name="Sorokin A."/>
            <person name="Ehrlich S.D."/>
        </authorList>
    </citation>
    <scope>NUCLEOTIDE SEQUENCE [GENOMIC DNA]</scope>
    <source>
        <strain>168 / Marburg / ATCC 6051 / DSM 10 / JCM 1465 / NBRC 13719 / NCIMB 3610 / NRRL NRS-744 / VKM B-501</strain>
    </source>
</reference>
<reference key="2">
    <citation type="journal article" date="1997" name="Nature">
        <title>The complete genome sequence of the Gram-positive bacterium Bacillus subtilis.</title>
        <authorList>
            <person name="Kunst F."/>
            <person name="Ogasawara N."/>
            <person name="Moszer I."/>
            <person name="Albertini A.M."/>
            <person name="Alloni G."/>
            <person name="Azevedo V."/>
            <person name="Bertero M.G."/>
            <person name="Bessieres P."/>
            <person name="Bolotin A."/>
            <person name="Borchert S."/>
            <person name="Borriss R."/>
            <person name="Boursier L."/>
            <person name="Brans A."/>
            <person name="Braun M."/>
            <person name="Brignell S.C."/>
            <person name="Bron S."/>
            <person name="Brouillet S."/>
            <person name="Bruschi C.V."/>
            <person name="Caldwell B."/>
            <person name="Capuano V."/>
            <person name="Carter N.M."/>
            <person name="Choi S.-K."/>
            <person name="Codani J.-J."/>
            <person name="Connerton I.F."/>
            <person name="Cummings N.J."/>
            <person name="Daniel R.A."/>
            <person name="Denizot F."/>
            <person name="Devine K.M."/>
            <person name="Duesterhoeft A."/>
            <person name="Ehrlich S.D."/>
            <person name="Emmerson P.T."/>
            <person name="Entian K.-D."/>
            <person name="Errington J."/>
            <person name="Fabret C."/>
            <person name="Ferrari E."/>
            <person name="Foulger D."/>
            <person name="Fritz C."/>
            <person name="Fujita M."/>
            <person name="Fujita Y."/>
            <person name="Fuma S."/>
            <person name="Galizzi A."/>
            <person name="Galleron N."/>
            <person name="Ghim S.-Y."/>
            <person name="Glaser P."/>
            <person name="Goffeau A."/>
            <person name="Golightly E.J."/>
            <person name="Grandi G."/>
            <person name="Guiseppi G."/>
            <person name="Guy B.J."/>
            <person name="Haga K."/>
            <person name="Haiech J."/>
            <person name="Harwood C.R."/>
            <person name="Henaut A."/>
            <person name="Hilbert H."/>
            <person name="Holsappel S."/>
            <person name="Hosono S."/>
            <person name="Hullo M.-F."/>
            <person name="Itaya M."/>
            <person name="Jones L.-M."/>
            <person name="Joris B."/>
            <person name="Karamata D."/>
            <person name="Kasahara Y."/>
            <person name="Klaerr-Blanchard M."/>
            <person name="Klein C."/>
            <person name="Kobayashi Y."/>
            <person name="Koetter P."/>
            <person name="Koningstein G."/>
            <person name="Krogh S."/>
            <person name="Kumano M."/>
            <person name="Kurita K."/>
            <person name="Lapidus A."/>
            <person name="Lardinois S."/>
            <person name="Lauber J."/>
            <person name="Lazarevic V."/>
            <person name="Lee S.-M."/>
            <person name="Levine A."/>
            <person name="Liu H."/>
            <person name="Masuda S."/>
            <person name="Mauel C."/>
            <person name="Medigue C."/>
            <person name="Medina N."/>
            <person name="Mellado R.P."/>
            <person name="Mizuno M."/>
            <person name="Moestl D."/>
            <person name="Nakai S."/>
            <person name="Noback M."/>
            <person name="Noone D."/>
            <person name="O'Reilly M."/>
            <person name="Ogawa K."/>
            <person name="Ogiwara A."/>
            <person name="Oudega B."/>
            <person name="Park S.-H."/>
            <person name="Parro V."/>
            <person name="Pohl T.M."/>
            <person name="Portetelle D."/>
            <person name="Porwollik S."/>
            <person name="Prescott A.M."/>
            <person name="Presecan E."/>
            <person name="Pujic P."/>
            <person name="Purnelle B."/>
            <person name="Rapoport G."/>
            <person name="Rey M."/>
            <person name="Reynolds S."/>
            <person name="Rieger M."/>
            <person name="Rivolta C."/>
            <person name="Rocha E."/>
            <person name="Roche B."/>
            <person name="Rose M."/>
            <person name="Sadaie Y."/>
            <person name="Sato T."/>
            <person name="Scanlan E."/>
            <person name="Schleich S."/>
            <person name="Schroeter R."/>
            <person name="Scoffone F."/>
            <person name="Sekiguchi J."/>
            <person name="Sekowska A."/>
            <person name="Seror S.J."/>
            <person name="Serror P."/>
            <person name="Shin B.-S."/>
            <person name="Soldo B."/>
            <person name="Sorokin A."/>
            <person name="Tacconi E."/>
            <person name="Takagi T."/>
            <person name="Takahashi H."/>
            <person name="Takemaru K."/>
            <person name="Takeuchi M."/>
            <person name="Tamakoshi A."/>
            <person name="Tanaka T."/>
            <person name="Terpstra P."/>
            <person name="Tognoni A."/>
            <person name="Tosato V."/>
            <person name="Uchiyama S."/>
            <person name="Vandenbol M."/>
            <person name="Vannier F."/>
            <person name="Vassarotti A."/>
            <person name="Viari A."/>
            <person name="Wambutt R."/>
            <person name="Wedler E."/>
            <person name="Wedler H."/>
            <person name="Weitzenegger T."/>
            <person name="Winters P."/>
            <person name="Wipat A."/>
            <person name="Yamamoto H."/>
            <person name="Yamane K."/>
            <person name="Yasumoto K."/>
            <person name="Yata K."/>
            <person name="Yoshida K."/>
            <person name="Yoshikawa H.-F."/>
            <person name="Zumstein E."/>
            <person name="Yoshikawa H."/>
            <person name="Danchin A."/>
        </authorList>
    </citation>
    <scope>NUCLEOTIDE SEQUENCE [LARGE SCALE GENOMIC DNA]</scope>
    <source>
        <strain>168</strain>
    </source>
</reference>
<name>YPEP_BACSU</name>
<protein>
    <recommendedName>
        <fullName>Uncharacterized protein YpeP</fullName>
    </recommendedName>
</protein>
<evidence type="ECO:0000255" key="1">
    <source>
        <dbReference type="PROSITE-ProRule" id="PRU00408"/>
    </source>
</evidence>
<evidence type="ECO:0000305" key="2"/>
<feature type="chain" id="PRO_0000049688" description="Uncharacterized protein YpeP">
    <location>
        <begin position="1"/>
        <end position="226"/>
    </location>
</feature>
<feature type="domain" description="RNase H type-1" evidence="1">
    <location>
        <begin position="71"/>
        <end position="207"/>
    </location>
</feature>